<keyword id="KW-0002">3D-structure</keyword>
<keyword id="KW-0119">Carbohydrate metabolism</keyword>
<keyword id="KW-0413">Isomerase</keyword>
<keyword id="KW-1185">Reference proteome</keyword>
<gene>
    <name type="primary">phi</name>
    <name type="ordered locus">MJ1247</name>
</gene>
<protein>
    <recommendedName>
        <fullName>3-hexulose-6-phosphate isomerase</fullName>
        <ecNumber>5.3.1.27</ecNumber>
    </recommendedName>
    <alternativeName>
        <fullName>6-phospho-3-hexuloisomerase</fullName>
        <shortName>PHI</shortName>
    </alternativeName>
</protein>
<accession>Q58644</accession>
<proteinExistence type="evidence at protein level"/>
<feature type="chain" id="PRO_0000136568" description="3-hexulose-6-phosphate isomerase">
    <location>
        <begin position="1"/>
        <end position="180"/>
    </location>
</feature>
<feature type="domain" description="SIS" evidence="1">
    <location>
        <begin position="33"/>
        <end position="167"/>
    </location>
</feature>
<feature type="active site" description="Proton acceptor" evidence="4">
    <location>
        <position position="147"/>
    </location>
</feature>
<feature type="binding site" evidence="4">
    <location>
        <position position="51"/>
    </location>
    <ligand>
        <name>substrate</name>
    </ligand>
</feature>
<feature type="binding site" evidence="4">
    <location>
        <begin position="90"/>
        <end position="95"/>
    </location>
    <ligand>
        <name>substrate</name>
    </ligand>
</feature>
<feature type="helix" evidence="5">
    <location>
        <begin position="5"/>
        <end position="15"/>
    </location>
</feature>
<feature type="helix" evidence="5">
    <location>
        <begin position="16"/>
        <end position="18"/>
    </location>
</feature>
<feature type="helix" evidence="5">
    <location>
        <begin position="19"/>
        <end position="22"/>
    </location>
</feature>
<feature type="helix" evidence="5">
    <location>
        <begin position="24"/>
        <end position="39"/>
    </location>
</feature>
<feature type="strand" evidence="5">
    <location>
        <begin position="41"/>
        <end position="46"/>
    </location>
</feature>
<feature type="helix" evidence="5">
    <location>
        <begin position="49"/>
        <end position="64"/>
    </location>
</feature>
<feature type="strand" evidence="5">
    <location>
        <begin position="69"/>
        <end position="71"/>
    </location>
</feature>
<feature type="strand" evidence="5">
    <location>
        <begin position="85"/>
        <end position="93"/>
    </location>
</feature>
<feature type="helix" evidence="5">
    <location>
        <begin position="96"/>
        <end position="106"/>
    </location>
</feature>
<feature type="strand" evidence="5">
    <location>
        <begin position="112"/>
        <end position="118"/>
    </location>
</feature>
<feature type="helix" evidence="5">
    <location>
        <begin position="121"/>
        <end position="125"/>
    </location>
</feature>
<feature type="strand" evidence="5">
    <location>
        <begin position="127"/>
        <end position="131"/>
    </location>
</feature>
<feature type="helix" evidence="5">
    <location>
        <begin position="144"/>
        <end position="164"/>
    </location>
</feature>
<feature type="helix" evidence="5">
    <location>
        <begin position="169"/>
        <end position="175"/>
    </location>
</feature>
<name>PHI_METJA</name>
<sequence>MSKLEELDIVSNNILILKKFYTNDEWKNKLDSLIDRIIKAKKIFIFGVGRSGYIGRCFAMRLMHLGFKSYFVGETTTPSYEKDDLLILISGSGRTESVLTVAKKAKNINNNIIAIVCECGNVVEFADLTIPLEVKKSKYLPMGTTFEETALIFLDLVIAEIMKRLNLDESEIIKRHCNLL</sequence>
<reference key="1">
    <citation type="journal article" date="1996" name="Science">
        <title>Complete genome sequence of the methanogenic archaeon, Methanococcus jannaschii.</title>
        <authorList>
            <person name="Bult C.J."/>
            <person name="White O."/>
            <person name="Olsen G.J."/>
            <person name="Zhou L."/>
            <person name="Fleischmann R.D."/>
            <person name="Sutton G.G."/>
            <person name="Blake J.A."/>
            <person name="FitzGerald L.M."/>
            <person name="Clayton R.A."/>
            <person name="Gocayne J.D."/>
            <person name="Kerlavage A.R."/>
            <person name="Dougherty B.A."/>
            <person name="Tomb J.-F."/>
            <person name="Adams M.D."/>
            <person name="Reich C.I."/>
            <person name="Overbeek R."/>
            <person name="Kirkness E.F."/>
            <person name="Weinstock K.G."/>
            <person name="Merrick J.M."/>
            <person name="Glodek A."/>
            <person name="Scott J.L."/>
            <person name="Geoghagen N.S.M."/>
            <person name="Weidman J.F."/>
            <person name="Fuhrmann J.L."/>
            <person name="Nguyen D."/>
            <person name="Utterback T.R."/>
            <person name="Kelley J.M."/>
            <person name="Peterson J.D."/>
            <person name="Sadow P.W."/>
            <person name="Hanna M.C."/>
            <person name="Cotton M.D."/>
            <person name="Roberts K.M."/>
            <person name="Hurst M.A."/>
            <person name="Kaine B.P."/>
            <person name="Borodovsky M."/>
            <person name="Klenk H.-P."/>
            <person name="Fraser C.M."/>
            <person name="Smith H.O."/>
            <person name="Woese C.R."/>
            <person name="Venter J.C."/>
        </authorList>
    </citation>
    <scope>NUCLEOTIDE SEQUENCE [LARGE SCALE GENOMIC DNA]</scope>
    <source>
        <strain>ATCC 43067 / DSM 2661 / JAL-1 / JCM 10045 / NBRC 100440</strain>
    </source>
</reference>
<reference key="2">
    <citation type="journal article" date="2005" name="J. Bacteriol.">
        <title>Ribose-5-phosphate biosynthesis in Methanocaldococcus jannaschii occurs in the absence of a pentose-phosphate pathway.</title>
        <authorList>
            <person name="Grochowski L.L."/>
            <person name="Xu H."/>
            <person name="White R.H."/>
        </authorList>
    </citation>
    <scope>PATHWAY</scope>
</reference>
<reference key="3">
    <citation type="journal article" date="2002" name="Structure">
        <title>Crystal structure of MJ1247 protein from M. jannaschii at 2.0 A resolution infers a molecular function of 3-hexulose-6-phosphate isomerase.</title>
        <authorList>
            <person name="Martinez-Cruz L.A."/>
            <person name="Dreyer M.K."/>
            <person name="Boisvert D.C."/>
            <person name="Yokota H."/>
            <person name="Martinez-Chantar M.L."/>
            <person name="Kim R."/>
            <person name="Kim S.-H."/>
        </authorList>
    </citation>
    <scope>X-RAY CRYSTALLOGRAPHY (2.0 ANGSTROMS) IN COMPLEX WITH CITRIC ACID</scope>
    <scope>FUNCTION</scope>
    <scope>SUBUNIT</scope>
</reference>
<comment type="function">
    <text evidence="2">Catalyzes the isomerization between 3-hexulose 6-phosphate and fructose 6-phosphate.</text>
</comment>
<comment type="catalytic activity">
    <reaction>
        <text>D-arabino-hex-3-ulose 6-phosphate = beta-D-fructose 6-phosphate</text>
        <dbReference type="Rhea" id="RHEA:25900"/>
        <dbReference type="ChEBI" id="CHEBI:57634"/>
        <dbReference type="ChEBI" id="CHEBI:58542"/>
        <dbReference type="EC" id="5.3.1.27"/>
    </reaction>
</comment>
<comment type="pathway">
    <text evidence="3">Carbohydrate biosynthesis; D-ribose 5-phosphate biosynthesis.</text>
</comment>
<comment type="subunit">
    <text evidence="2">Homotetramer.</text>
</comment>
<comment type="similarity">
    <text evidence="4">Belongs to the SIS family. PHI subfamily.</text>
</comment>
<evidence type="ECO:0000255" key="1">
    <source>
        <dbReference type="PROSITE-ProRule" id="PRU00797"/>
    </source>
</evidence>
<evidence type="ECO:0000269" key="2">
    <source>
    </source>
</evidence>
<evidence type="ECO:0000269" key="3">
    <source>
    </source>
</evidence>
<evidence type="ECO:0000305" key="4"/>
<evidence type="ECO:0007829" key="5">
    <source>
        <dbReference type="PDB" id="1JEO"/>
    </source>
</evidence>
<dbReference type="EC" id="5.3.1.27"/>
<dbReference type="EMBL" id="L77117">
    <property type="protein sequence ID" value="AAB99251.1"/>
    <property type="molecule type" value="Genomic_DNA"/>
</dbReference>
<dbReference type="PIR" id="F64455">
    <property type="entry name" value="F64455"/>
</dbReference>
<dbReference type="RefSeq" id="WP_010870759.1">
    <property type="nucleotide sequence ID" value="NC_000909.1"/>
</dbReference>
<dbReference type="PDB" id="1JEO">
    <property type="method" value="X-ray"/>
    <property type="resolution" value="2.00 A"/>
    <property type="chains" value="A=1-180"/>
</dbReference>
<dbReference type="PDBsum" id="1JEO"/>
<dbReference type="SMR" id="Q58644"/>
<dbReference type="FunCoup" id="Q58644">
    <property type="interactions" value="158"/>
</dbReference>
<dbReference type="STRING" id="243232.MJ_1247"/>
<dbReference type="PaxDb" id="243232-MJ_1247"/>
<dbReference type="EnsemblBacteria" id="AAB99251">
    <property type="protein sequence ID" value="AAB99251"/>
    <property type="gene ID" value="MJ_1247"/>
</dbReference>
<dbReference type="GeneID" id="1452144"/>
<dbReference type="KEGG" id="mja:MJ_1247"/>
<dbReference type="eggNOG" id="arCOG00068">
    <property type="taxonomic scope" value="Archaea"/>
</dbReference>
<dbReference type="HOGENOM" id="CLU_094236_1_1_2"/>
<dbReference type="InParanoid" id="Q58644"/>
<dbReference type="OrthoDB" id="350569at2157"/>
<dbReference type="PhylomeDB" id="Q58644"/>
<dbReference type="BRENDA" id="5.3.1.27">
    <property type="organism ID" value="3260"/>
</dbReference>
<dbReference type="UniPathway" id="UPA00293"/>
<dbReference type="EvolutionaryTrace" id="Q58644"/>
<dbReference type="Proteomes" id="UP000000805">
    <property type="component" value="Chromosome"/>
</dbReference>
<dbReference type="GO" id="GO:0043800">
    <property type="term" value="F:6-phospho-3-hexuloisomerase activity"/>
    <property type="evidence" value="ECO:0007669"/>
    <property type="project" value="UniProtKB-EC"/>
</dbReference>
<dbReference type="GO" id="GO:0097367">
    <property type="term" value="F:carbohydrate derivative binding"/>
    <property type="evidence" value="ECO:0007669"/>
    <property type="project" value="InterPro"/>
</dbReference>
<dbReference type="GO" id="GO:1901135">
    <property type="term" value="P:carbohydrate derivative metabolic process"/>
    <property type="evidence" value="ECO:0007669"/>
    <property type="project" value="InterPro"/>
</dbReference>
<dbReference type="CDD" id="cd05005">
    <property type="entry name" value="SIS_PHI"/>
    <property type="match status" value="1"/>
</dbReference>
<dbReference type="Gene3D" id="3.40.50.10490">
    <property type="entry name" value="Glucose-6-phosphate isomerase like protein, domain 1"/>
    <property type="match status" value="1"/>
</dbReference>
<dbReference type="InterPro" id="IPR017552">
    <property type="entry name" value="PHI/rmpB"/>
</dbReference>
<dbReference type="InterPro" id="IPR001347">
    <property type="entry name" value="SIS_dom"/>
</dbReference>
<dbReference type="InterPro" id="IPR046348">
    <property type="entry name" value="SIS_dom_sf"/>
</dbReference>
<dbReference type="NCBIfam" id="TIGR03127">
    <property type="entry name" value="RuMP_HxlB"/>
    <property type="match status" value="1"/>
</dbReference>
<dbReference type="PANTHER" id="PTHR43443">
    <property type="entry name" value="3-HEXULOSE-6-PHOSPHATE ISOMERASE"/>
    <property type="match status" value="1"/>
</dbReference>
<dbReference type="PANTHER" id="PTHR43443:SF1">
    <property type="entry name" value="3-HEXULOSE-6-PHOSPHATE ISOMERASE"/>
    <property type="match status" value="1"/>
</dbReference>
<dbReference type="Pfam" id="PF01380">
    <property type="entry name" value="SIS"/>
    <property type="match status" value="1"/>
</dbReference>
<dbReference type="SUPFAM" id="SSF53697">
    <property type="entry name" value="SIS domain"/>
    <property type="match status" value="1"/>
</dbReference>
<dbReference type="PROSITE" id="PS51464">
    <property type="entry name" value="SIS"/>
    <property type="match status" value="1"/>
</dbReference>
<organism>
    <name type="scientific">Methanocaldococcus jannaschii (strain ATCC 43067 / DSM 2661 / JAL-1 / JCM 10045 / NBRC 100440)</name>
    <name type="common">Methanococcus jannaschii</name>
    <dbReference type="NCBI Taxonomy" id="243232"/>
    <lineage>
        <taxon>Archaea</taxon>
        <taxon>Methanobacteriati</taxon>
        <taxon>Methanobacteriota</taxon>
        <taxon>Methanomada group</taxon>
        <taxon>Methanococci</taxon>
        <taxon>Methanococcales</taxon>
        <taxon>Methanocaldococcaceae</taxon>
        <taxon>Methanocaldococcus</taxon>
    </lineage>
</organism>